<feature type="chain" id="PRO_1000124804" description="Pantothenate kinase">
    <location>
        <begin position="1"/>
        <end position="310"/>
    </location>
</feature>
<feature type="binding site" evidence="1">
    <location>
        <begin position="95"/>
        <end position="102"/>
    </location>
    <ligand>
        <name>ATP</name>
        <dbReference type="ChEBI" id="CHEBI:30616"/>
    </ligand>
</feature>
<reference key="1">
    <citation type="submission" date="2009-03" db="EMBL/GenBank/DDBJ databases">
        <title>Comparison of the complete genome sequences of Rhodococcus erythropolis PR4 and Rhodococcus opacus B4.</title>
        <authorList>
            <person name="Takarada H."/>
            <person name="Sekine M."/>
            <person name="Hosoyama A."/>
            <person name="Yamada R."/>
            <person name="Fujisawa T."/>
            <person name="Omata S."/>
            <person name="Shimizu A."/>
            <person name="Tsukatani N."/>
            <person name="Tanikawa S."/>
            <person name="Fujita N."/>
            <person name="Harayama S."/>
        </authorList>
    </citation>
    <scope>NUCLEOTIDE SEQUENCE [LARGE SCALE GENOMIC DNA]</scope>
    <source>
        <strain>B4</strain>
    </source>
</reference>
<proteinExistence type="inferred from homology"/>
<gene>
    <name evidence="1" type="primary">coaA</name>
    <name type="ordered locus">ROP_59190</name>
</gene>
<organism>
    <name type="scientific">Rhodococcus opacus (strain B4)</name>
    <dbReference type="NCBI Taxonomy" id="632772"/>
    <lineage>
        <taxon>Bacteria</taxon>
        <taxon>Bacillati</taxon>
        <taxon>Actinomycetota</taxon>
        <taxon>Actinomycetes</taxon>
        <taxon>Mycobacteriales</taxon>
        <taxon>Nocardiaceae</taxon>
        <taxon>Rhodococcus</taxon>
    </lineage>
</organism>
<sequence length="310" mass="35554">MARTSESSPYVEFDRKQWRTLRKSTPLVLTEEELYGLRGLGEQIDLEEVAEVYLPLSRLIHLQVAARQRLFAATATFLGEKHPDQQVPFVIGVAGSVAVGKSTTARVLQALLARWEHHPRVDLVTTDGFLYPTAELNRRGIMHRKGFPESYDRRKLLRFVTEVKSGAEEVAAPVYSHISYDIIPGQYHLIRQPDILIIEGLNVLQTGPRLMVSDLFDFSIYVDARIEDIENWYIQRFLALRKTSFSDPDAHFHHYAGLSDRDATSAAQEIWHNINRPNLVENILPTRPRATLVLRKDANHSINRLRLRKL</sequence>
<accession>C1AYH1</accession>
<dbReference type="EC" id="2.7.1.33" evidence="1"/>
<dbReference type="EMBL" id="AP011115">
    <property type="protein sequence ID" value="BAH54166.1"/>
    <property type="molecule type" value="Genomic_DNA"/>
</dbReference>
<dbReference type="RefSeq" id="WP_005238987.1">
    <property type="nucleotide sequence ID" value="NC_012522.1"/>
</dbReference>
<dbReference type="SMR" id="C1AYH1"/>
<dbReference type="STRING" id="632772.ROP_59190"/>
<dbReference type="GeneID" id="69890236"/>
<dbReference type="KEGG" id="rop:ROP_59190"/>
<dbReference type="PATRIC" id="fig|632772.20.peg.6184"/>
<dbReference type="HOGENOM" id="CLU_053818_1_1_11"/>
<dbReference type="OrthoDB" id="1550976at2"/>
<dbReference type="UniPathway" id="UPA00241">
    <property type="reaction ID" value="UER00352"/>
</dbReference>
<dbReference type="Proteomes" id="UP000002212">
    <property type="component" value="Chromosome"/>
</dbReference>
<dbReference type="GO" id="GO:0005737">
    <property type="term" value="C:cytoplasm"/>
    <property type="evidence" value="ECO:0007669"/>
    <property type="project" value="UniProtKB-SubCell"/>
</dbReference>
<dbReference type="GO" id="GO:0005524">
    <property type="term" value="F:ATP binding"/>
    <property type="evidence" value="ECO:0007669"/>
    <property type="project" value="UniProtKB-UniRule"/>
</dbReference>
<dbReference type="GO" id="GO:0004594">
    <property type="term" value="F:pantothenate kinase activity"/>
    <property type="evidence" value="ECO:0007669"/>
    <property type="project" value="UniProtKB-UniRule"/>
</dbReference>
<dbReference type="GO" id="GO:0015937">
    <property type="term" value="P:coenzyme A biosynthetic process"/>
    <property type="evidence" value="ECO:0007669"/>
    <property type="project" value="UniProtKB-UniRule"/>
</dbReference>
<dbReference type="CDD" id="cd02025">
    <property type="entry name" value="PanK"/>
    <property type="match status" value="1"/>
</dbReference>
<dbReference type="FunFam" id="3.40.50.300:FF:000242">
    <property type="entry name" value="Pantothenate kinase"/>
    <property type="match status" value="1"/>
</dbReference>
<dbReference type="Gene3D" id="3.40.50.300">
    <property type="entry name" value="P-loop containing nucleotide triphosphate hydrolases"/>
    <property type="match status" value="1"/>
</dbReference>
<dbReference type="HAMAP" id="MF_00215">
    <property type="entry name" value="Pantothen_kinase_1"/>
    <property type="match status" value="1"/>
</dbReference>
<dbReference type="InterPro" id="IPR027417">
    <property type="entry name" value="P-loop_NTPase"/>
</dbReference>
<dbReference type="InterPro" id="IPR004566">
    <property type="entry name" value="PanK"/>
</dbReference>
<dbReference type="InterPro" id="IPR006083">
    <property type="entry name" value="PRK/URK"/>
</dbReference>
<dbReference type="NCBIfam" id="TIGR00554">
    <property type="entry name" value="panK_bact"/>
    <property type="match status" value="1"/>
</dbReference>
<dbReference type="PANTHER" id="PTHR10285">
    <property type="entry name" value="URIDINE KINASE"/>
    <property type="match status" value="1"/>
</dbReference>
<dbReference type="Pfam" id="PF00485">
    <property type="entry name" value="PRK"/>
    <property type="match status" value="1"/>
</dbReference>
<dbReference type="PIRSF" id="PIRSF000545">
    <property type="entry name" value="Pantothenate_kin"/>
    <property type="match status" value="1"/>
</dbReference>
<dbReference type="SUPFAM" id="SSF52540">
    <property type="entry name" value="P-loop containing nucleoside triphosphate hydrolases"/>
    <property type="match status" value="1"/>
</dbReference>
<evidence type="ECO:0000255" key="1">
    <source>
        <dbReference type="HAMAP-Rule" id="MF_00215"/>
    </source>
</evidence>
<protein>
    <recommendedName>
        <fullName evidence="1">Pantothenate kinase</fullName>
        <ecNumber evidence="1">2.7.1.33</ecNumber>
    </recommendedName>
    <alternativeName>
        <fullName evidence="1">Pantothenic acid kinase</fullName>
    </alternativeName>
</protein>
<keyword id="KW-0067">ATP-binding</keyword>
<keyword id="KW-0173">Coenzyme A biosynthesis</keyword>
<keyword id="KW-0963">Cytoplasm</keyword>
<keyword id="KW-0418">Kinase</keyword>
<keyword id="KW-0547">Nucleotide-binding</keyword>
<keyword id="KW-0808">Transferase</keyword>
<name>COAA_RHOOB</name>
<comment type="catalytic activity">
    <reaction evidence="1">
        <text>(R)-pantothenate + ATP = (R)-4'-phosphopantothenate + ADP + H(+)</text>
        <dbReference type="Rhea" id="RHEA:16373"/>
        <dbReference type="ChEBI" id="CHEBI:10986"/>
        <dbReference type="ChEBI" id="CHEBI:15378"/>
        <dbReference type="ChEBI" id="CHEBI:29032"/>
        <dbReference type="ChEBI" id="CHEBI:30616"/>
        <dbReference type="ChEBI" id="CHEBI:456216"/>
        <dbReference type="EC" id="2.7.1.33"/>
    </reaction>
</comment>
<comment type="pathway">
    <text evidence="1">Cofactor biosynthesis; coenzyme A biosynthesis; CoA from (R)-pantothenate: step 1/5.</text>
</comment>
<comment type="subcellular location">
    <subcellularLocation>
        <location evidence="1">Cytoplasm</location>
    </subcellularLocation>
</comment>
<comment type="similarity">
    <text evidence="1">Belongs to the prokaryotic pantothenate kinase family.</text>
</comment>